<gene>
    <name type="primary">HDGF</name>
    <name type="synonym">HMG1L2</name>
</gene>
<reference key="1">
    <citation type="journal article" date="1994" name="J. Biol. Chem.">
        <title>Molecular cloning of complementary DNA for a novel human hepatoma-derived growth factor. Its homology with high mobility group-1 protein.</title>
        <authorList>
            <person name="Nakamura H."/>
            <person name="Izumoto Y."/>
            <person name="Kambe H."/>
            <person name="Kuroda T."/>
            <person name="Mori T."/>
            <person name="Kawamura K."/>
            <person name="Yamamoto H."/>
            <person name="Kishimoto T."/>
        </authorList>
    </citation>
    <scope>NUCLEOTIDE SEQUENCE [MRNA] (ISOFORM 1)</scope>
    <scope>PROTEIN SEQUENCE OF 4-24</scope>
    <scope>TISSUE SPECIFICITY</scope>
    <source>
        <tissue>Hepatoma</tissue>
    </source>
</reference>
<reference key="2">
    <citation type="journal article" date="2004" name="Nat. Genet.">
        <title>Complete sequencing and characterization of 21,243 full-length human cDNAs.</title>
        <authorList>
            <person name="Ota T."/>
            <person name="Suzuki Y."/>
            <person name="Nishikawa T."/>
            <person name="Otsuki T."/>
            <person name="Sugiyama T."/>
            <person name="Irie R."/>
            <person name="Wakamatsu A."/>
            <person name="Hayashi K."/>
            <person name="Sato H."/>
            <person name="Nagai K."/>
            <person name="Kimura K."/>
            <person name="Makita H."/>
            <person name="Sekine M."/>
            <person name="Obayashi M."/>
            <person name="Nishi T."/>
            <person name="Shibahara T."/>
            <person name="Tanaka T."/>
            <person name="Ishii S."/>
            <person name="Yamamoto J."/>
            <person name="Saito K."/>
            <person name="Kawai Y."/>
            <person name="Isono Y."/>
            <person name="Nakamura Y."/>
            <person name="Nagahari K."/>
            <person name="Murakami K."/>
            <person name="Yasuda T."/>
            <person name="Iwayanagi T."/>
            <person name="Wagatsuma M."/>
            <person name="Shiratori A."/>
            <person name="Sudo H."/>
            <person name="Hosoiri T."/>
            <person name="Kaku Y."/>
            <person name="Kodaira H."/>
            <person name="Kondo H."/>
            <person name="Sugawara M."/>
            <person name="Takahashi M."/>
            <person name="Kanda K."/>
            <person name="Yokoi T."/>
            <person name="Furuya T."/>
            <person name="Kikkawa E."/>
            <person name="Omura Y."/>
            <person name="Abe K."/>
            <person name="Kamihara K."/>
            <person name="Katsuta N."/>
            <person name="Sato K."/>
            <person name="Tanikawa M."/>
            <person name="Yamazaki M."/>
            <person name="Ninomiya K."/>
            <person name="Ishibashi T."/>
            <person name="Yamashita H."/>
            <person name="Murakawa K."/>
            <person name="Fujimori K."/>
            <person name="Tanai H."/>
            <person name="Kimata M."/>
            <person name="Watanabe M."/>
            <person name="Hiraoka S."/>
            <person name="Chiba Y."/>
            <person name="Ishida S."/>
            <person name="Ono Y."/>
            <person name="Takiguchi S."/>
            <person name="Watanabe S."/>
            <person name="Yosida M."/>
            <person name="Hotuta T."/>
            <person name="Kusano J."/>
            <person name="Kanehori K."/>
            <person name="Takahashi-Fujii A."/>
            <person name="Hara H."/>
            <person name="Tanase T.-O."/>
            <person name="Nomura Y."/>
            <person name="Togiya S."/>
            <person name="Komai F."/>
            <person name="Hara R."/>
            <person name="Takeuchi K."/>
            <person name="Arita M."/>
            <person name="Imose N."/>
            <person name="Musashino K."/>
            <person name="Yuuki H."/>
            <person name="Oshima A."/>
            <person name="Sasaki N."/>
            <person name="Aotsuka S."/>
            <person name="Yoshikawa Y."/>
            <person name="Matsunawa H."/>
            <person name="Ichihara T."/>
            <person name="Shiohata N."/>
            <person name="Sano S."/>
            <person name="Moriya S."/>
            <person name="Momiyama H."/>
            <person name="Satoh N."/>
            <person name="Takami S."/>
            <person name="Terashima Y."/>
            <person name="Suzuki O."/>
            <person name="Nakagawa S."/>
            <person name="Senoh A."/>
            <person name="Mizoguchi H."/>
            <person name="Goto Y."/>
            <person name="Shimizu F."/>
            <person name="Wakebe H."/>
            <person name="Hishigaki H."/>
            <person name="Watanabe T."/>
            <person name="Sugiyama A."/>
            <person name="Takemoto M."/>
            <person name="Kawakami B."/>
            <person name="Yamazaki M."/>
            <person name="Watanabe K."/>
            <person name="Kumagai A."/>
            <person name="Itakura S."/>
            <person name="Fukuzumi Y."/>
            <person name="Fujimori Y."/>
            <person name="Komiyama M."/>
            <person name="Tashiro H."/>
            <person name="Tanigami A."/>
            <person name="Fujiwara T."/>
            <person name="Ono T."/>
            <person name="Yamada K."/>
            <person name="Fujii Y."/>
            <person name="Ozaki K."/>
            <person name="Hirao M."/>
            <person name="Ohmori Y."/>
            <person name="Kawabata A."/>
            <person name="Hikiji T."/>
            <person name="Kobatake N."/>
            <person name="Inagaki H."/>
            <person name="Ikema Y."/>
            <person name="Okamoto S."/>
            <person name="Okitani R."/>
            <person name="Kawakami T."/>
            <person name="Noguchi S."/>
            <person name="Itoh T."/>
            <person name="Shigeta K."/>
            <person name="Senba T."/>
            <person name="Matsumura K."/>
            <person name="Nakajima Y."/>
            <person name="Mizuno T."/>
            <person name="Morinaga M."/>
            <person name="Sasaki M."/>
            <person name="Togashi T."/>
            <person name="Oyama M."/>
            <person name="Hata H."/>
            <person name="Watanabe M."/>
            <person name="Komatsu T."/>
            <person name="Mizushima-Sugano J."/>
            <person name="Satoh T."/>
            <person name="Shirai Y."/>
            <person name="Takahashi Y."/>
            <person name="Nakagawa K."/>
            <person name="Okumura K."/>
            <person name="Nagase T."/>
            <person name="Nomura N."/>
            <person name="Kikuchi H."/>
            <person name="Masuho Y."/>
            <person name="Yamashita R."/>
            <person name="Nakai K."/>
            <person name="Yada T."/>
            <person name="Nakamura Y."/>
            <person name="Ohara O."/>
            <person name="Isogai T."/>
            <person name="Sugano S."/>
        </authorList>
    </citation>
    <scope>NUCLEOTIDE SEQUENCE [LARGE SCALE MRNA] (ISOFORM 2)</scope>
    <scope>VARIANT LEU-201</scope>
</reference>
<reference key="3">
    <citation type="journal article" date="2006" name="Nature">
        <title>The DNA sequence and biological annotation of human chromosome 1.</title>
        <authorList>
            <person name="Gregory S.G."/>
            <person name="Barlow K.F."/>
            <person name="McLay K.E."/>
            <person name="Kaul R."/>
            <person name="Swarbreck D."/>
            <person name="Dunham A."/>
            <person name="Scott C.E."/>
            <person name="Howe K.L."/>
            <person name="Woodfine K."/>
            <person name="Spencer C.C.A."/>
            <person name="Jones M.C."/>
            <person name="Gillson C."/>
            <person name="Searle S."/>
            <person name="Zhou Y."/>
            <person name="Kokocinski F."/>
            <person name="McDonald L."/>
            <person name="Evans R."/>
            <person name="Phillips K."/>
            <person name="Atkinson A."/>
            <person name="Cooper R."/>
            <person name="Jones C."/>
            <person name="Hall R.E."/>
            <person name="Andrews T.D."/>
            <person name="Lloyd C."/>
            <person name="Ainscough R."/>
            <person name="Almeida J.P."/>
            <person name="Ambrose K.D."/>
            <person name="Anderson F."/>
            <person name="Andrew R.W."/>
            <person name="Ashwell R.I.S."/>
            <person name="Aubin K."/>
            <person name="Babbage A.K."/>
            <person name="Bagguley C.L."/>
            <person name="Bailey J."/>
            <person name="Beasley H."/>
            <person name="Bethel G."/>
            <person name="Bird C.P."/>
            <person name="Bray-Allen S."/>
            <person name="Brown J.Y."/>
            <person name="Brown A.J."/>
            <person name="Buckley D."/>
            <person name="Burton J."/>
            <person name="Bye J."/>
            <person name="Carder C."/>
            <person name="Chapman J.C."/>
            <person name="Clark S.Y."/>
            <person name="Clarke G."/>
            <person name="Clee C."/>
            <person name="Cobley V."/>
            <person name="Collier R.E."/>
            <person name="Corby N."/>
            <person name="Coville G.J."/>
            <person name="Davies J."/>
            <person name="Deadman R."/>
            <person name="Dunn M."/>
            <person name="Earthrowl M."/>
            <person name="Ellington A.G."/>
            <person name="Errington H."/>
            <person name="Frankish A."/>
            <person name="Frankland J."/>
            <person name="French L."/>
            <person name="Garner P."/>
            <person name="Garnett J."/>
            <person name="Gay L."/>
            <person name="Ghori M.R.J."/>
            <person name="Gibson R."/>
            <person name="Gilby L.M."/>
            <person name="Gillett W."/>
            <person name="Glithero R.J."/>
            <person name="Grafham D.V."/>
            <person name="Griffiths C."/>
            <person name="Griffiths-Jones S."/>
            <person name="Grocock R."/>
            <person name="Hammond S."/>
            <person name="Harrison E.S.I."/>
            <person name="Hart E."/>
            <person name="Haugen E."/>
            <person name="Heath P.D."/>
            <person name="Holmes S."/>
            <person name="Holt K."/>
            <person name="Howden P.J."/>
            <person name="Hunt A.R."/>
            <person name="Hunt S.E."/>
            <person name="Hunter G."/>
            <person name="Isherwood J."/>
            <person name="James R."/>
            <person name="Johnson C."/>
            <person name="Johnson D."/>
            <person name="Joy A."/>
            <person name="Kay M."/>
            <person name="Kershaw J.K."/>
            <person name="Kibukawa M."/>
            <person name="Kimberley A.M."/>
            <person name="King A."/>
            <person name="Knights A.J."/>
            <person name="Lad H."/>
            <person name="Laird G."/>
            <person name="Lawlor S."/>
            <person name="Leongamornlert D.A."/>
            <person name="Lloyd D.M."/>
            <person name="Loveland J."/>
            <person name="Lovell J."/>
            <person name="Lush M.J."/>
            <person name="Lyne R."/>
            <person name="Martin S."/>
            <person name="Mashreghi-Mohammadi M."/>
            <person name="Matthews L."/>
            <person name="Matthews N.S.W."/>
            <person name="McLaren S."/>
            <person name="Milne S."/>
            <person name="Mistry S."/>
            <person name="Moore M.J.F."/>
            <person name="Nickerson T."/>
            <person name="O'Dell C.N."/>
            <person name="Oliver K."/>
            <person name="Palmeiri A."/>
            <person name="Palmer S.A."/>
            <person name="Parker A."/>
            <person name="Patel D."/>
            <person name="Pearce A.V."/>
            <person name="Peck A.I."/>
            <person name="Pelan S."/>
            <person name="Phelps K."/>
            <person name="Phillimore B.J."/>
            <person name="Plumb R."/>
            <person name="Rajan J."/>
            <person name="Raymond C."/>
            <person name="Rouse G."/>
            <person name="Saenphimmachak C."/>
            <person name="Sehra H.K."/>
            <person name="Sheridan E."/>
            <person name="Shownkeen R."/>
            <person name="Sims S."/>
            <person name="Skuce C.D."/>
            <person name="Smith M."/>
            <person name="Steward C."/>
            <person name="Subramanian S."/>
            <person name="Sycamore N."/>
            <person name="Tracey A."/>
            <person name="Tromans A."/>
            <person name="Van Helmond Z."/>
            <person name="Wall M."/>
            <person name="Wallis J.M."/>
            <person name="White S."/>
            <person name="Whitehead S.L."/>
            <person name="Wilkinson J.E."/>
            <person name="Willey D.L."/>
            <person name="Williams H."/>
            <person name="Wilming L."/>
            <person name="Wray P.W."/>
            <person name="Wu Z."/>
            <person name="Coulson A."/>
            <person name="Vaudin M."/>
            <person name="Sulston J.E."/>
            <person name="Durbin R.M."/>
            <person name="Hubbard T."/>
            <person name="Wooster R."/>
            <person name="Dunham I."/>
            <person name="Carter N.P."/>
            <person name="McVean G."/>
            <person name="Ross M.T."/>
            <person name="Harrow J."/>
            <person name="Olson M.V."/>
            <person name="Beck S."/>
            <person name="Rogers J."/>
            <person name="Bentley D.R."/>
        </authorList>
    </citation>
    <scope>NUCLEOTIDE SEQUENCE [LARGE SCALE GENOMIC DNA]</scope>
</reference>
<reference key="4">
    <citation type="submission" date="2005-09" db="EMBL/GenBank/DDBJ databases">
        <authorList>
            <person name="Mural R.J."/>
            <person name="Istrail S."/>
            <person name="Sutton G.G."/>
            <person name="Florea L."/>
            <person name="Halpern A.L."/>
            <person name="Mobarry C.M."/>
            <person name="Lippert R."/>
            <person name="Walenz B."/>
            <person name="Shatkay H."/>
            <person name="Dew I."/>
            <person name="Miller J.R."/>
            <person name="Flanigan M.J."/>
            <person name="Edwards N.J."/>
            <person name="Bolanos R."/>
            <person name="Fasulo D."/>
            <person name="Halldorsson B.V."/>
            <person name="Hannenhalli S."/>
            <person name="Turner R."/>
            <person name="Yooseph S."/>
            <person name="Lu F."/>
            <person name="Nusskern D.R."/>
            <person name="Shue B.C."/>
            <person name="Zheng X.H."/>
            <person name="Zhong F."/>
            <person name="Delcher A.L."/>
            <person name="Huson D.H."/>
            <person name="Kravitz S.A."/>
            <person name="Mouchard L."/>
            <person name="Reinert K."/>
            <person name="Remington K.A."/>
            <person name="Clark A.G."/>
            <person name="Waterman M.S."/>
            <person name="Eichler E.E."/>
            <person name="Adams M.D."/>
            <person name="Hunkapiller M.W."/>
            <person name="Myers E.W."/>
            <person name="Venter J.C."/>
        </authorList>
    </citation>
    <scope>NUCLEOTIDE SEQUENCE [LARGE SCALE GENOMIC DNA]</scope>
</reference>
<reference key="5">
    <citation type="journal article" date="2004" name="Genome Res.">
        <title>The status, quality, and expansion of the NIH full-length cDNA project: the Mammalian Gene Collection (MGC).</title>
        <authorList>
            <consortium name="The MGC Project Team"/>
        </authorList>
    </citation>
    <scope>NUCLEOTIDE SEQUENCE [LARGE SCALE MRNA] (ISOFORM 1)</scope>
    <source>
        <tissue>Brain</tissue>
    </source>
</reference>
<reference key="6">
    <citation type="journal article" date="2002" name="J. Biol. Chem.">
        <title>Hepatoma-derived growth factor stimulates cell growth after translocation to the nucleus by nuclear localization signals.</title>
        <authorList>
            <person name="Kishima Y."/>
            <person name="Yamamoto H."/>
            <person name="Izumoto Y."/>
            <person name="Yoshida K."/>
            <person name="Enomoto H."/>
            <person name="Yamamoto M."/>
            <person name="Kuroda T."/>
            <person name="Ito H."/>
            <person name="Yoshizaki K."/>
            <person name="Nakamura H."/>
        </authorList>
    </citation>
    <scope>SUBCELLULAR LOCATION (ISOFORM 1)</scope>
    <scope>NUCLEAR LOCALIZATION SIGNAL</scope>
</reference>
<reference key="7">
    <citation type="journal article" date="2004" name="Proc. Natl. Acad. Sci. U.S.A.">
        <title>Large-scale characterization of HeLa cell nuclear phosphoproteins.</title>
        <authorList>
            <person name="Beausoleil S.A."/>
            <person name="Jedrychowski M."/>
            <person name="Schwartz D."/>
            <person name="Elias J.E."/>
            <person name="Villen J."/>
            <person name="Li J."/>
            <person name="Cohn M.A."/>
            <person name="Cantley L.C."/>
            <person name="Gygi S.P."/>
        </authorList>
    </citation>
    <scope>PHOSPHORYLATION [LARGE SCALE ANALYSIS] AT SER-165</scope>
    <scope>IDENTIFICATION BY MASS SPECTROMETRY [LARGE SCALE ANALYSIS]</scope>
    <source>
        <tissue>Cervix carcinoma</tissue>
    </source>
</reference>
<reference key="8">
    <citation type="journal article" date="2006" name="Cell">
        <title>Global, in vivo, and site-specific phosphorylation dynamics in signaling networks.</title>
        <authorList>
            <person name="Olsen J.V."/>
            <person name="Blagoev B."/>
            <person name="Gnad F."/>
            <person name="Macek B."/>
            <person name="Kumar C."/>
            <person name="Mortensen P."/>
            <person name="Mann M."/>
        </authorList>
    </citation>
    <scope>PHOSPHORYLATION [LARGE SCALE ANALYSIS] AT SER-132; SER-133 AND SER-165</scope>
    <scope>IDENTIFICATION BY MASS SPECTROMETRY [LARGE SCALE ANALYSIS]</scope>
    <source>
        <tissue>Cervix carcinoma</tissue>
    </source>
</reference>
<reference key="9">
    <citation type="journal article" date="2006" name="Nat. Biotechnol.">
        <title>A probability-based approach for high-throughput protein phosphorylation analysis and site localization.</title>
        <authorList>
            <person name="Beausoleil S.A."/>
            <person name="Villen J."/>
            <person name="Gerber S.A."/>
            <person name="Rush J."/>
            <person name="Gygi S.P."/>
        </authorList>
    </citation>
    <scope>PHOSPHORYLATION [LARGE SCALE ANALYSIS] AT SER-165 AND THR-200</scope>
    <scope>IDENTIFICATION BY MASS SPECTROMETRY [LARGE SCALE ANALYSIS]</scope>
    <source>
        <tissue>Cervix carcinoma</tissue>
    </source>
</reference>
<reference key="10">
    <citation type="journal article" date="2006" name="Pituitary">
        <title>Phosphoproteomic analysis of the human pituitary.</title>
        <authorList>
            <person name="Beranova-Giorgianni S."/>
            <person name="Zhao Y."/>
            <person name="Desiderio D.M."/>
            <person name="Giorgianni F."/>
        </authorList>
    </citation>
    <scope>PHOSPHORYLATION [LARGE SCALE ANALYSIS] AT SER-132 AND SER-133</scope>
    <scope>IDENTIFICATION BY MASS SPECTROMETRY [LARGE SCALE ANALYSIS]</scope>
    <source>
        <tissue>Pituitary</tissue>
    </source>
</reference>
<reference key="11">
    <citation type="journal article" date="2007" name="BMC Mol. Biol.">
        <title>Hepatoma-derived growth factor binds DNA through the N-terminal PWWP domain.</title>
        <authorList>
            <person name="Yang J."/>
            <person name="Everett A.D."/>
        </authorList>
    </citation>
    <scope>FUNCTION</scope>
    <scope>SUBCELLULAR LOCATION</scope>
    <scope>DNA-BINDING</scope>
</reference>
<reference key="12">
    <citation type="journal article" date="2007" name="Electrophoresis">
        <title>Toward a global characterization of the phosphoproteome in prostate cancer cells: identification of phosphoproteins in the LNCaP cell line.</title>
        <authorList>
            <person name="Giorgianni F."/>
            <person name="Zhao Y."/>
            <person name="Desiderio D.M."/>
            <person name="Beranova-Giorgianni S."/>
        </authorList>
    </citation>
    <scope>PHOSPHORYLATION [LARGE SCALE ANALYSIS] AT SER-132 AND SER-133</scope>
    <scope>IDENTIFICATION BY MASS SPECTROMETRY [LARGE SCALE ANALYSIS]</scope>
    <source>
        <tissue>Prostate cancer</tissue>
    </source>
</reference>
<reference key="13">
    <citation type="journal article" date="2008" name="FEBS J.">
        <title>SUMOylation of the hepatoma-derived growth factor negatively influences its binding to chromatin.</title>
        <authorList>
            <person name="Thakar K."/>
            <person name="Niedenthal R."/>
            <person name="Okaz E."/>
            <person name="Franken S."/>
            <person name="Jakobs A."/>
            <person name="Gupta S."/>
            <person name="Kelm S."/>
            <person name="Dietz F."/>
        </authorList>
    </citation>
    <scope>SUMOYLATION AT LYS-80</scope>
</reference>
<reference key="14">
    <citation type="journal article" date="2008" name="J. Proteome Res.">
        <title>Phosphorylation analysis of primary human T lymphocytes using sequential IMAC and titanium oxide enrichment.</title>
        <authorList>
            <person name="Carrascal M."/>
            <person name="Ovelleiro D."/>
            <person name="Casas V."/>
            <person name="Gay M."/>
            <person name="Abian J."/>
        </authorList>
    </citation>
    <scope>PHOSPHORYLATION [LARGE SCALE ANALYSIS] AT SER-132; SER-133 AND SER-165</scope>
    <scope>IDENTIFICATION BY MASS SPECTROMETRY [LARGE SCALE ANALYSIS]</scope>
    <source>
        <tissue>T-cell</tissue>
    </source>
</reference>
<reference key="15">
    <citation type="journal article" date="2008" name="J. Proteome Res.">
        <title>Phosphoproteome of resting human platelets.</title>
        <authorList>
            <person name="Zahedi R.P."/>
            <person name="Lewandrowski U."/>
            <person name="Wiesner J."/>
            <person name="Wortelkamp S."/>
            <person name="Moebius J."/>
            <person name="Schuetz C."/>
            <person name="Walter U."/>
            <person name="Gambaryan S."/>
            <person name="Sickmann A."/>
        </authorList>
    </citation>
    <scope>PHOSPHORYLATION [LARGE SCALE ANALYSIS] AT SER-132 AND SER-133</scope>
    <scope>IDENTIFICATION BY MASS SPECTROMETRY [LARGE SCALE ANALYSIS]</scope>
    <source>
        <tissue>Platelet</tissue>
    </source>
</reference>
<reference key="16">
    <citation type="journal article" date="2008" name="Mol. Cell">
        <title>Kinase-selective enrichment enables quantitative phosphoproteomics of the kinome across the cell cycle.</title>
        <authorList>
            <person name="Daub H."/>
            <person name="Olsen J.V."/>
            <person name="Bairlein M."/>
            <person name="Gnad F."/>
            <person name="Oppermann F.S."/>
            <person name="Korner R."/>
            <person name="Greff Z."/>
            <person name="Keri G."/>
            <person name="Stemmann O."/>
            <person name="Mann M."/>
        </authorList>
    </citation>
    <scope>PHOSPHORYLATION [LARGE SCALE ANALYSIS] AT SER-165</scope>
    <scope>IDENTIFICATION BY MASS SPECTROMETRY [LARGE SCALE ANALYSIS]</scope>
    <source>
        <tissue>Cervix carcinoma</tissue>
    </source>
</reference>
<reference key="17">
    <citation type="journal article" date="2008" name="Proc. Natl. Acad. Sci. U.S.A.">
        <title>A quantitative atlas of mitotic phosphorylation.</title>
        <authorList>
            <person name="Dephoure N."/>
            <person name="Zhou C."/>
            <person name="Villen J."/>
            <person name="Beausoleil S.A."/>
            <person name="Bakalarski C.E."/>
            <person name="Elledge S.J."/>
            <person name="Gygi S.P."/>
        </authorList>
    </citation>
    <scope>PHOSPHORYLATION [LARGE SCALE ANALYSIS] AT THR-200; SER-206 AND SER-239</scope>
    <scope>IDENTIFICATION BY MASS SPECTROMETRY [LARGE SCALE ANALYSIS]</scope>
    <source>
        <tissue>Cervix carcinoma</tissue>
    </source>
</reference>
<reference key="18">
    <citation type="journal article" date="2008" name="Proteomics">
        <title>Large-scale phosphoproteome analysis of human liver tissue by enrichment and fractionation of phosphopeptides with strong anion exchange chromatography.</title>
        <authorList>
            <person name="Han G."/>
            <person name="Ye M."/>
            <person name="Zhou H."/>
            <person name="Jiang X."/>
            <person name="Feng S."/>
            <person name="Jiang X."/>
            <person name="Tian R."/>
            <person name="Wan D."/>
            <person name="Zou H."/>
            <person name="Gu J."/>
        </authorList>
    </citation>
    <scope>PHOSPHORYLATION [LARGE SCALE ANALYSIS] AT SER-132; SER-133 AND SER-165</scope>
    <scope>IDENTIFICATION BY MASS SPECTROMETRY [LARGE SCALE ANALYSIS]</scope>
    <source>
        <tissue>Liver</tissue>
    </source>
</reference>
<reference key="19">
    <citation type="journal article" date="2009" name="Anal. Chem.">
        <title>Lys-N and trypsin cover complementary parts of the phosphoproteome in a refined SCX-based approach.</title>
        <authorList>
            <person name="Gauci S."/>
            <person name="Helbig A.O."/>
            <person name="Slijper M."/>
            <person name="Krijgsveld J."/>
            <person name="Heck A.J."/>
            <person name="Mohammed S."/>
        </authorList>
    </citation>
    <scope>IDENTIFICATION BY MASS SPECTROMETRY [LARGE SCALE ANALYSIS]</scope>
</reference>
<reference key="20">
    <citation type="journal article" date="2009" name="Mol. Cell. Proteomics">
        <title>Large-scale proteomics analysis of the human kinome.</title>
        <authorList>
            <person name="Oppermann F.S."/>
            <person name="Gnad F."/>
            <person name="Olsen J.V."/>
            <person name="Hornberger R."/>
            <person name="Greff Z."/>
            <person name="Keri G."/>
            <person name="Mann M."/>
            <person name="Daub H."/>
        </authorList>
    </citation>
    <scope>PHOSPHORYLATION [LARGE SCALE ANALYSIS] AT SER-165</scope>
    <scope>IDENTIFICATION BY MASS SPECTROMETRY [LARGE SCALE ANALYSIS]</scope>
</reference>
<reference key="21">
    <citation type="journal article" date="2009" name="Sci. Signal.">
        <title>Quantitative phosphoproteomic analysis of T cell receptor signaling reveals system-wide modulation of protein-protein interactions.</title>
        <authorList>
            <person name="Mayya V."/>
            <person name="Lundgren D.H."/>
            <person name="Hwang S.-I."/>
            <person name="Rezaul K."/>
            <person name="Wu L."/>
            <person name="Eng J.K."/>
            <person name="Rodionov V."/>
            <person name="Han D.K."/>
        </authorList>
    </citation>
    <scope>PHOSPHORYLATION [LARGE SCALE ANALYSIS] AT SER-132 AND SER-165</scope>
    <scope>IDENTIFICATION BY MASS SPECTROMETRY [LARGE SCALE ANALYSIS]</scope>
    <source>
        <tissue>Leukemic T-cell</tissue>
    </source>
</reference>
<reference key="22">
    <citation type="journal article" date="2009" name="Science">
        <title>Lysine acetylation targets protein complexes and co-regulates major cellular functions.</title>
        <authorList>
            <person name="Choudhary C."/>
            <person name="Kumar C."/>
            <person name="Gnad F."/>
            <person name="Nielsen M.L."/>
            <person name="Rehman M."/>
            <person name="Walther T.C."/>
            <person name="Olsen J.V."/>
            <person name="Mann M."/>
        </authorList>
    </citation>
    <scope>ACETYLATION [LARGE SCALE ANALYSIS] AT LYS-44</scope>
    <scope>IDENTIFICATION BY MASS SPECTROMETRY [LARGE SCALE ANALYSIS]</scope>
</reference>
<reference key="23">
    <citation type="journal article" date="2010" name="Sci. Signal.">
        <title>Quantitative phosphoproteomics reveals widespread full phosphorylation site occupancy during mitosis.</title>
        <authorList>
            <person name="Olsen J.V."/>
            <person name="Vermeulen M."/>
            <person name="Santamaria A."/>
            <person name="Kumar C."/>
            <person name="Miller M.L."/>
            <person name="Jensen L.J."/>
            <person name="Gnad F."/>
            <person name="Cox J."/>
            <person name="Jensen T.S."/>
            <person name="Nigg E.A."/>
            <person name="Brunak S."/>
            <person name="Mann M."/>
        </authorList>
    </citation>
    <scope>PHOSPHORYLATION [LARGE SCALE ANALYSIS] AT SER-133; SER-165; THR-200 AND SER-239</scope>
    <scope>IDENTIFICATION BY MASS SPECTROMETRY [LARGE SCALE ANALYSIS]</scope>
    <source>
        <tissue>Cervix carcinoma</tissue>
    </source>
</reference>
<reference key="24">
    <citation type="journal article" date="2011" name="BMC Syst. Biol.">
        <title>Initial characterization of the human central proteome.</title>
        <authorList>
            <person name="Burkard T.R."/>
            <person name="Planyavsky M."/>
            <person name="Kaupe I."/>
            <person name="Breitwieser F.P."/>
            <person name="Buerckstuemmer T."/>
            <person name="Bennett K.L."/>
            <person name="Superti-Furga G."/>
            <person name="Colinge J."/>
        </authorList>
    </citation>
    <scope>IDENTIFICATION BY MASS SPECTROMETRY [LARGE SCALE ANALYSIS]</scope>
</reference>
<reference key="25">
    <citation type="journal article" date="2011" name="Sci. Signal.">
        <title>System-wide temporal characterization of the proteome and phosphoproteome of human embryonic stem cell differentiation.</title>
        <authorList>
            <person name="Rigbolt K.T."/>
            <person name="Prokhorova T.A."/>
            <person name="Akimov V."/>
            <person name="Henningsen J."/>
            <person name="Johansen P.T."/>
            <person name="Kratchmarova I."/>
            <person name="Kassem M."/>
            <person name="Mann M."/>
            <person name="Olsen J.V."/>
            <person name="Blagoev B."/>
        </authorList>
    </citation>
    <scope>PHOSPHORYLATION [LARGE SCALE ANALYSIS] AT SER-165</scope>
    <scope>IDENTIFICATION BY MASS SPECTROMETRY [LARGE SCALE ANALYSIS]</scope>
</reference>
<reference key="26">
    <citation type="journal article" date="2013" name="J. Proteome Res.">
        <title>Toward a comprehensive characterization of a human cancer cell phosphoproteome.</title>
        <authorList>
            <person name="Zhou H."/>
            <person name="Di Palma S."/>
            <person name="Preisinger C."/>
            <person name="Peng M."/>
            <person name="Polat A.N."/>
            <person name="Heck A.J."/>
            <person name="Mohammed S."/>
        </authorList>
    </citation>
    <scope>PHOSPHORYLATION [LARGE SCALE ANALYSIS] AT SER-132; SER-133; SER-165; THR-184 AND SER-239</scope>
    <scope>IDENTIFICATION BY MASS SPECTROMETRY [LARGE SCALE ANALYSIS]</scope>
    <source>
        <tissue>Cervix carcinoma</tissue>
        <tissue>Erythroleukemia</tissue>
    </source>
</reference>
<reference key="27">
    <citation type="journal article" date="2014" name="J. Proteomics">
        <title>An enzyme assisted RP-RPLC approach for in-depth analysis of human liver phosphoproteome.</title>
        <authorList>
            <person name="Bian Y."/>
            <person name="Song C."/>
            <person name="Cheng K."/>
            <person name="Dong M."/>
            <person name="Wang F."/>
            <person name="Huang J."/>
            <person name="Sun D."/>
            <person name="Wang L."/>
            <person name="Ye M."/>
            <person name="Zou H."/>
        </authorList>
    </citation>
    <scope>PHOSPHORYLATION [LARGE SCALE ANALYSIS] AT SER-132; SER-133; SER-165; THR-200 AND SER-202</scope>
    <scope>IDENTIFICATION BY MASS SPECTROMETRY [LARGE SCALE ANALYSIS]</scope>
    <source>
        <tissue>Liver</tissue>
    </source>
</reference>
<reference key="28">
    <citation type="journal article" date="2014" name="Nat. Struct. Mol. Biol.">
        <title>Uncovering global SUMOylation signaling networks in a site-specific manner.</title>
        <authorList>
            <person name="Hendriks I.A."/>
            <person name="D'Souza R.C."/>
            <person name="Yang B."/>
            <person name="Verlaan-de Vries M."/>
            <person name="Mann M."/>
            <person name="Vertegaal A.C."/>
        </authorList>
    </citation>
    <scope>SUMOYLATION [LARGE SCALE ANALYSIS] AT LYS-80</scope>
    <scope>IDENTIFICATION BY MASS SPECTROMETRY [LARGE SCALE ANALYSIS]</scope>
</reference>
<reference key="29">
    <citation type="journal article" date="2014" name="Proc. Natl. Acad. Sci. U.S.A.">
        <title>Mapping of SUMO sites and analysis of SUMOylation changes induced by external stimuli.</title>
        <authorList>
            <person name="Impens F."/>
            <person name="Radoshevich L."/>
            <person name="Cossart P."/>
            <person name="Ribet D."/>
        </authorList>
    </citation>
    <scope>IDENTIFICATION BY MASS SPECTROMETRY [LARGE SCALE ANALYSIS]</scope>
</reference>
<reference key="30">
    <citation type="journal article" date="2015" name="Cell Rep.">
        <title>SUMO-2 orchestrates chromatin modifiers in response to DNA damage.</title>
        <authorList>
            <person name="Hendriks I.A."/>
            <person name="Treffers L.W."/>
            <person name="Verlaan-de Vries M."/>
            <person name="Olsen J.V."/>
            <person name="Vertegaal A.C."/>
        </authorList>
    </citation>
    <scope>SUMOYLATION [LARGE SCALE ANALYSIS] AT LYS-80</scope>
    <scope>IDENTIFICATION BY MASS SPECTROMETRY [LARGE SCALE ANALYSIS]</scope>
</reference>
<reference key="31">
    <citation type="journal article" date="2016" name="Biol. Chem.">
        <title>Two new isoforms of the human hepatoma-derived growth factor interact with components of the cytoskeleton.</title>
        <authorList>
            <person name="Nuesse J."/>
            <person name="Mirastschijski U."/>
            <person name="Waespy M."/>
            <person name="Oetjen J."/>
            <person name="Brandes N."/>
            <person name="Rebello O."/>
            <person name="Paroni F."/>
            <person name="Kelm S."/>
            <person name="Dietz F."/>
        </authorList>
    </citation>
    <scope>ALTERNATIVE SPLICING</scope>
    <scope>FUNCTION</scope>
    <scope>INTERACTION WITH ACTIN; DYNEIN; TUBULIN; VIMENTIN; NCL AND YBX1</scope>
    <scope>SUBCELLULAR LOCATION</scope>
    <scope>DOMAIN</scope>
</reference>
<reference key="32">
    <citation type="journal article" date="2017" name="Biol. Chem.">
        <title>Intra- or extra-exosomal secretion of HDGF isoforms: the extraordinary function of the HDGF-A N-terminal peptide.</title>
        <authorList>
            <person name="Nuesse J."/>
            <person name="Blumrich E.M."/>
            <person name="Mirastschijski U."/>
            <person name="Kappelmann L."/>
            <person name="Kelm S."/>
            <person name="Dietz F."/>
        </authorList>
    </citation>
    <scope>SUBCELLULAR LOCATION</scope>
    <scope>MUTAGENESIS OF SER-165</scope>
</reference>
<reference key="33">
    <citation type="journal article" date="2017" name="Nat. Struct. Mol. Biol.">
        <title>Site-specific mapping of the human SUMO proteome reveals co-modification with phosphorylation.</title>
        <authorList>
            <person name="Hendriks I.A."/>
            <person name="Lyon D."/>
            <person name="Young C."/>
            <person name="Jensen L.J."/>
            <person name="Vertegaal A.C."/>
            <person name="Nielsen M.L."/>
        </authorList>
    </citation>
    <scope>SUMOYLATION [LARGE SCALE ANALYSIS] AT LYS-80</scope>
    <scope>IDENTIFICATION BY MASS SPECTROMETRY [LARGE SCALE ANALYSIS]</scope>
</reference>
<reference key="34">
    <citation type="journal article" date="2007" name="J. Mol. Biol.">
        <title>PWWP module of human hepatoma-derived growth factor forms a domain-swapped dimer with much higher affinity for heparin.</title>
        <authorList>
            <person name="Sue S.C."/>
            <person name="Lee W.T."/>
            <person name="Tien S.C."/>
            <person name="Lee S.C."/>
            <person name="Yu J.G."/>
            <person name="Wu W.J."/>
            <person name="Wu W.G."/>
            <person name="Huang T.-H."/>
        </authorList>
    </citation>
    <scope>STRUCTURE BY NMR OF 1-100</scope>
    <scope>SUBUNIT</scope>
    <scope>DOMAIN</scope>
</reference>
<reference key="35">
    <citation type="journal article" date="2004" name="J. Mol. Biol.">
        <title>Solution structure and heparin interaction of human hepatoma-derived growth factor.</title>
        <authorList>
            <person name="Sue S.C."/>
            <person name="Chen J.Y."/>
            <person name="Lee S.C."/>
            <person name="Wu W.G."/>
            <person name="Huang T.-H."/>
        </authorList>
    </citation>
    <scope>STRUCTURE BY NMR OF 1-100</scope>
    <scope>FUNCTION</scope>
    <scope>HEPARIN-BINDING SITES</scope>
    <scope>DOMAIN</scope>
</reference>
<feature type="chain" id="PRO_0000191700" description="Hepatoma-derived growth factor">
    <location>
        <begin position="1"/>
        <end position="240"/>
    </location>
</feature>
<feature type="domain" description="PWWP" evidence="3">
    <location>
        <begin position="12"/>
        <end position="69"/>
    </location>
</feature>
<feature type="region of interest" description="Disordered" evidence="4">
    <location>
        <begin position="69"/>
        <end position="240"/>
    </location>
</feature>
<feature type="short sequence motif" description="Nuclear localization signal" evidence="5">
    <location>
        <begin position="75"/>
        <end position="80"/>
    </location>
</feature>
<feature type="short sequence motif" description="Bipartite nuclear localization signal">
    <location>
        <begin position="155"/>
        <end position="170"/>
    </location>
</feature>
<feature type="compositionally biased region" description="Polar residues" evidence="4">
    <location>
        <begin position="91"/>
        <end position="106"/>
    </location>
</feature>
<feature type="compositionally biased region" description="Acidic residues" evidence="4">
    <location>
        <begin position="110"/>
        <end position="121"/>
    </location>
</feature>
<feature type="compositionally biased region" description="Basic and acidic residues" evidence="4">
    <location>
        <begin position="135"/>
        <end position="173"/>
    </location>
</feature>
<feature type="compositionally biased region" description="Basic and acidic residues" evidence="4">
    <location>
        <begin position="180"/>
        <end position="197"/>
    </location>
</feature>
<feature type="compositionally biased region" description="Acidic residues" evidence="4">
    <location>
        <begin position="212"/>
        <end position="225"/>
    </location>
</feature>
<feature type="compositionally biased region" description="Basic and acidic residues" evidence="4">
    <location>
        <begin position="226"/>
        <end position="240"/>
    </location>
</feature>
<feature type="binding site" evidence="16">
    <location>
        <position position="19"/>
    </location>
    <ligand>
        <name>heparin</name>
        <dbReference type="ChEBI" id="CHEBI:28304"/>
    </ligand>
</feature>
<feature type="binding site" evidence="16">
    <location>
        <position position="21"/>
    </location>
    <ligand>
        <name>heparin</name>
        <dbReference type="ChEBI" id="CHEBI:28304"/>
    </ligand>
</feature>
<feature type="binding site" evidence="16">
    <location>
        <position position="72"/>
    </location>
    <ligand>
        <name>heparin</name>
        <dbReference type="ChEBI" id="CHEBI:28304"/>
    </ligand>
</feature>
<feature type="binding site" evidence="16">
    <location>
        <position position="75"/>
    </location>
    <ligand>
        <name>heparin</name>
        <dbReference type="ChEBI" id="CHEBI:28304"/>
    </ligand>
</feature>
<feature type="binding site" evidence="16">
    <location>
        <position position="79"/>
    </location>
    <ligand>
        <name>heparin</name>
        <dbReference type="ChEBI" id="CHEBI:28304"/>
    </ligand>
</feature>
<feature type="binding site" evidence="16">
    <location>
        <position position="80"/>
    </location>
    <ligand>
        <name>heparin</name>
        <dbReference type="ChEBI" id="CHEBI:28304"/>
    </ligand>
</feature>
<feature type="modified residue" description="N6-acetyllysine" evidence="28">
    <location>
        <position position="44"/>
    </location>
</feature>
<feature type="modified residue" description="Phosphoserine" evidence="18 20 21 22 23 26 29 32 33">
    <location>
        <position position="132"/>
    </location>
</feature>
<feature type="modified residue" description="Phosphoserine" evidence="18 20 21 22 23 26 30 32 33">
    <location>
        <position position="133"/>
    </location>
</feature>
<feature type="modified residue" description="Phosphoserine" evidence="17 19 20 23 25 26 27 29 30 31 32 33">
    <location>
        <position position="165"/>
    </location>
</feature>
<feature type="modified residue" description="Phosphothreonine" evidence="32">
    <location>
        <position position="184"/>
    </location>
</feature>
<feature type="modified residue" description="Phosphoserine" evidence="2">
    <location>
        <position position="199"/>
    </location>
</feature>
<feature type="modified residue" description="Phosphothreonine" evidence="19 24 30 33">
    <location>
        <position position="200"/>
    </location>
</feature>
<feature type="modified residue" description="Phosphoserine" evidence="33">
    <location>
        <position position="202"/>
    </location>
</feature>
<feature type="modified residue" description="Phosphoserine" evidence="24">
    <location>
        <position position="206"/>
    </location>
</feature>
<feature type="modified residue" description="Phosphoserine" evidence="24 30 32">
    <location>
        <position position="239"/>
    </location>
</feature>
<feature type="disulfide bond" evidence="1">
    <location>
        <begin position="12"/>
        <end position="108"/>
    </location>
</feature>
<feature type="cross-link" description="Glycyl lysine isopeptide (Lys-Gly) (interchain with G-Cter in SUMO); alternate">
    <location>
        <position position="80"/>
    </location>
</feature>
<feature type="cross-link" description="Glycyl lysine isopeptide (Lys-Gly) (interchain with G-Cter in SUMO2); alternate" evidence="34 35 36">
    <location>
        <position position="80"/>
    </location>
</feature>
<feature type="splice variant" id="VSP_045620" description="In isoform 2." evidence="14">
    <original>MSRSNRQKEYKCGDLVFAKMKGYPHWPAR</original>
    <variation>MEQRAGGNRVQTSTLNCAGAAV</variation>
    <location>
        <begin position="1"/>
        <end position="29"/>
    </location>
</feature>
<feature type="splice variant" id="VSP_047328" description="In isoform 3." evidence="16">
    <original>MSRSNRQKEYKCGDLVFAKMKGYPHWPAR</original>
    <variation>MHPEGGQFVPQLLGHLLATKLKRFLLSKGGRRAQIPDVSRATPHT</variation>
    <location>
        <begin position="1"/>
        <end position="29"/>
    </location>
</feature>
<feature type="sequence variant" id="VAR_061209" description="In dbSNP:rs4399146." evidence="6">
    <original>P</original>
    <variation>L</variation>
    <location>
        <position position="201"/>
    </location>
</feature>
<feature type="mutagenesis site" description="Abolishes secretion and alters location of the protein from inside the exosome to the exosomal surface." evidence="12">
    <original>S</original>
    <variation>A</variation>
    <location>
        <position position="165"/>
    </location>
</feature>
<feature type="sequence conflict" description="In Ref. 2; BAG53283." evidence="16" ref="2">
    <original>S</original>
    <variation>P</variation>
    <location>
        <position position="206"/>
    </location>
</feature>
<feature type="strand" evidence="37">
    <location>
        <begin position="7"/>
        <end position="9"/>
    </location>
</feature>
<feature type="strand" evidence="37">
    <location>
        <begin position="15"/>
        <end position="20"/>
    </location>
</feature>
<feature type="strand" evidence="37">
    <location>
        <begin position="23"/>
        <end position="31"/>
    </location>
</feature>
<feature type="strand" evidence="37">
    <location>
        <begin position="35"/>
        <end position="38"/>
    </location>
</feature>
<feature type="strand" evidence="37">
    <location>
        <begin position="45"/>
        <end position="49"/>
    </location>
</feature>
<feature type="turn" evidence="37">
    <location>
        <begin position="50"/>
        <end position="53"/>
    </location>
</feature>
<feature type="strand" evidence="37">
    <location>
        <begin position="54"/>
        <end position="58"/>
    </location>
</feature>
<feature type="helix" evidence="38">
    <location>
        <begin position="60"/>
        <end position="62"/>
    </location>
</feature>
<feature type="helix" evidence="37">
    <location>
        <begin position="66"/>
        <end position="72"/>
    </location>
</feature>
<feature type="helix" evidence="37">
    <location>
        <begin position="80"/>
        <end position="90"/>
    </location>
</feature>
<proteinExistence type="evidence at protein level"/>
<name>HDGF_HUMAN</name>
<accession>P51858</accession>
<accession>B3KU21</accession>
<accession>D3DVC9</accession>
<accession>Q5SZ07</accession>
<accession>Q5SZ08</accession>
<accession>Q5SZ09</accession>
<keyword id="KW-0002">3D-structure</keyword>
<keyword id="KW-0007">Acetylation</keyword>
<keyword id="KW-0025">Alternative splicing</keyword>
<keyword id="KW-0963">Cytoplasm</keyword>
<keyword id="KW-0903">Direct protein sequencing</keyword>
<keyword id="KW-1015">Disulfide bond</keyword>
<keyword id="KW-0238">DNA-binding</keyword>
<keyword id="KW-0339">Growth factor</keyword>
<keyword id="KW-0358">Heparin-binding</keyword>
<keyword id="KW-1017">Isopeptide bond</keyword>
<keyword id="KW-0547">Nucleotide-binding</keyword>
<keyword id="KW-0539">Nucleus</keyword>
<keyword id="KW-0597">Phosphoprotein</keyword>
<keyword id="KW-1267">Proteomics identification</keyword>
<keyword id="KW-1185">Reference proteome</keyword>
<keyword id="KW-0678">Repressor</keyword>
<keyword id="KW-0964">Secreted</keyword>
<keyword id="KW-0804">Transcription</keyword>
<keyword id="KW-0805">Transcription regulation</keyword>
<keyword id="KW-0832">Ubl conjugation</keyword>
<sequence length="240" mass="26788">MSRSNRQKEYKCGDLVFAKMKGYPHWPARIDEMPEAAVKSTANKYQVFFFGTHETAFLGPKDLFPYEESKEKFGKPNKRKGFSEGLWEIENNPTVKASGYQSSQKKSCVEEPEPEPEAAEGDGDKKGNAEGSSDEEGKLVIDEPAKEKNEKGALKRRAGDLLEDSPKRPKEAENPEGEEKEAATLEVERPLPMEVEKNSTPSEPGSGRGPPQEEEEEEDEEEEATKEDAEAPGIRDHESL</sequence>
<dbReference type="EMBL" id="D16431">
    <property type="protein sequence ID" value="BAA03903.1"/>
    <property type="molecule type" value="mRNA"/>
</dbReference>
<dbReference type="EMBL" id="AK096411">
    <property type="protein sequence ID" value="BAG53283.1"/>
    <property type="molecule type" value="mRNA"/>
</dbReference>
<dbReference type="EMBL" id="AL590666">
    <property type="status" value="NOT_ANNOTATED_CDS"/>
    <property type="molecule type" value="Genomic_DNA"/>
</dbReference>
<dbReference type="EMBL" id="CH471121">
    <property type="protein sequence ID" value="EAW52910.1"/>
    <property type="molecule type" value="Genomic_DNA"/>
</dbReference>
<dbReference type="EMBL" id="CH471121">
    <property type="protein sequence ID" value="EAW52911.1"/>
    <property type="molecule type" value="Genomic_DNA"/>
</dbReference>
<dbReference type="EMBL" id="CH471121">
    <property type="protein sequence ID" value="EAW52912.1"/>
    <property type="molecule type" value="Genomic_DNA"/>
</dbReference>
<dbReference type="EMBL" id="BC018991">
    <property type="protein sequence ID" value="AAH18991.1"/>
    <property type="molecule type" value="mRNA"/>
</dbReference>
<dbReference type="CCDS" id="CCDS1156.1">
    <molecule id="P51858-1"/>
</dbReference>
<dbReference type="CCDS" id="CCDS44247.1">
    <molecule id="P51858-3"/>
</dbReference>
<dbReference type="CCDS" id="CCDS44248.1">
    <molecule id="P51858-2"/>
</dbReference>
<dbReference type="PIR" id="A55055">
    <property type="entry name" value="A55055"/>
</dbReference>
<dbReference type="RefSeq" id="NP_001119522.1">
    <molecule id="P51858-3"/>
    <property type="nucleotide sequence ID" value="NM_001126050.2"/>
</dbReference>
<dbReference type="RefSeq" id="NP_001119523.1">
    <molecule id="P51858-2"/>
    <property type="nucleotide sequence ID" value="NM_001126051.1"/>
</dbReference>
<dbReference type="RefSeq" id="NP_001306115.1">
    <property type="nucleotide sequence ID" value="NM_001319186.1"/>
</dbReference>
<dbReference type="RefSeq" id="NP_001306116.1">
    <property type="nucleotide sequence ID" value="NM_001319187.1"/>
</dbReference>
<dbReference type="RefSeq" id="NP_001306117.1">
    <property type="nucleotide sequence ID" value="NM_001319188.1"/>
</dbReference>
<dbReference type="RefSeq" id="NP_004485.1">
    <molecule id="P51858-1"/>
    <property type="nucleotide sequence ID" value="NM_004494.3"/>
</dbReference>
<dbReference type="PDB" id="1RI0">
    <property type="method" value="NMR"/>
    <property type="chains" value="A=1-100"/>
</dbReference>
<dbReference type="PDB" id="2NLU">
    <property type="method" value="NMR"/>
    <property type="chains" value="A/B=1-100"/>
</dbReference>
<dbReference type="PDBsum" id="1RI0"/>
<dbReference type="PDBsum" id="2NLU"/>
<dbReference type="BMRB" id="P51858"/>
<dbReference type="SMR" id="P51858"/>
<dbReference type="BioGRID" id="109318">
    <property type="interactions" value="325"/>
</dbReference>
<dbReference type="CORUM" id="P51858"/>
<dbReference type="FunCoup" id="P51858">
    <property type="interactions" value="894"/>
</dbReference>
<dbReference type="IntAct" id="P51858">
    <property type="interactions" value="138"/>
</dbReference>
<dbReference type="MINT" id="P51858"/>
<dbReference type="STRING" id="9606.ENSP00000357189"/>
<dbReference type="DrugBank" id="DB09130">
    <property type="generic name" value="Copper"/>
</dbReference>
<dbReference type="GlyGen" id="P51858">
    <property type="glycosylation" value="1 site, 1 O-linked glycan (1 site)"/>
</dbReference>
<dbReference type="iPTMnet" id="P51858"/>
<dbReference type="MetOSite" id="P51858"/>
<dbReference type="PhosphoSitePlus" id="P51858"/>
<dbReference type="SwissPalm" id="P51858"/>
<dbReference type="BioMuta" id="HDGF"/>
<dbReference type="DMDM" id="1708157"/>
<dbReference type="jPOST" id="P51858"/>
<dbReference type="MassIVE" id="P51858"/>
<dbReference type="PaxDb" id="9606-ENSP00000357189"/>
<dbReference type="PeptideAtlas" id="P51858"/>
<dbReference type="ProteomicsDB" id="56439">
    <molecule id="P51858-1"/>
</dbReference>
<dbReference type="ProteomicsDB" id="64044"/>
<dbReference type="ProteomicsDB" id="64045"/>
<dbReference type="Pumba" id="P51858"/>
<dbReference type="TopDownProteomics" id="P51858-1">
    <molecule id="P51858-1"/>
</dbReference>
<dbReference type="TopDownProteomics" id="P51858-2">
    <molecule id="P51858-2"/>
</dbReference>
<dbReference type="Antibodypedia" id="34226">
    <property type="antibodies" value="389 antibodies from 39 providers"/>
</dbReference>
<dbReference type="DNASU" id="3068"/>
<dbReference type="Ensembl" id="ENST00000357325.10">
    <molecule id="P51858-1"/>
    <property type="protein sequence ID" value="ENSP00000349878.5"/>
    <property type="gene ID" value="ENSG00000143321.19"/>
</dbReference>
<dbReference type="Ensembl" id="ENST00000368206.5">
    <molecule id="P51858-3"/>
    <property type="protein sequence ID" value="ENSP00000357189.5"/>
    <property type="gene ID" value="ENSG00000143321.19"/>
</dbReference>
<dbReference type="Ensembl" id="ENST00000368209.9">
    <molecule id="P51858-2"/>
    <property type="protein sequence ID" value="ENSP00000357192.5"/>
    <property type="gene ID" value="ENSG00000143321.19"/>
</dbReference>
<dbReference type="GeneID" id="3068"/>
<dbReference type="KEGG" id="hsa:3068"/>
<dbReference type="MANE-Select" id="ENST00000357325.10">
    <property type="protein sequence ID" value="ENSP00000349878.5"/>
    <property type="RefSeq nucleotide sequence ID" value="NM_004494.3"/>
    <property type="RefSeq protein sequence ID" value="NP_004485.1"/>
</dbReference>
<dbReference type="UCSC" id="uc001fpy.5">
    <molecule id="P51858-1"/>
    <property type="organism name" value="human"/>
</dbReference>
<dbReference type="AGR" id="HGNC:4856"/>
<dbReference type="CTD" id="3068"/>
<dbReference type="DisGeNET" id="3068"/>
<dbReference type="GeneCards" id="HDGF"/>
<dbReference type="HGNC" id="HGNC:4856">
    <property type="gene designation" value="HDGF"/>
</dbReference>
<dbReference type="HPA" id="ENSG00000143321">
    <property type="expression patterns" value="Low tissue specificity"/>
</dbReference>
<dbReference type="MIM" id="600339">
    <property type="type" value="gene"/>
</dbReference>
<dbReference type="neXtProt" id="NX_P51858"/>
<dbReference type="OpenTargets" id="ENSG00000143321"/>
<dbReference type="PharmGKB" id="PA29234"/>
<dbReference type="VEuPathDB" id="HostDB:ENSG00000143321"/>
<dbReference type="eggNOG" id="KOG1904">
    <property type="taxonomic scope" value="Eukaryota"/>
</dbReference>
<dbReference type="GeneTree" id="ENSGT00940000157485"/>
<dbReference type="HOGENOM" id="CLU_090867_0_0_1"/>
<dbReference type="InParanoid" id="P51858"/>
<dbReference type="OMA" id="KWTRGEF"/>
<dbReference type="OrthoDB" id="62853at2759"/>
<dbReference type="PAN-GO" id="P51858">
    <property type="GO annotations" value="4 GO annotations based on evolutionary models"/>
</dbReference>
<dbReference type="PhylomeDB" id="P51858"/>
<dbReference type="TreeFam" id="TF105385"/>
<dbReference type="PathwayCommons" id="P51858"/>
<dbReference type="Reactome" id="R-HSA-381038">
    <property type="pathway name" value="XBP1(S) activates chaperone genes"/>
</dbReference>
<dbReference type="SignaLink" id="P51858"/>
<dbReference type="BioGRID-ORCS" id="3068">
    <property type="hits" value="19 hits in 1170 CRISPR screens"/>
</dbReference>
<dbReference type="ChiTaRS" id="HDGF">
    <property type="organism name" value="human"/>
</dbReference>
<dbReference type="EvolutionaryTrace" id="P51858"/>
<dbReference type="GeneWiki" id="Hepatoma-derived_growth_factor"/>
<dbReference type="GenomeRNAi" id="3068"/>
<dbReference type="Pharos" id="P51858">
    <property type="development level" value="Tbio"/>
</dbReference>
<dbReference type="PRO" id="PR:P51858"/>
<dbReference type="Proteomes" id="UP000005640">
    <property type="component" value="Chromosome 1"/>
</dbReference>
<dbReference type="RNAct" id="P51858">
    <property type="molecule type" value="protein"/>
</dbReference>
<dbReference type="Bgee" id="ENSG00000143321">
    <property type="expression patterns" value="Expressed in endometrium epithelium and 204 other cell types or tissues"/>
</dbReference>
<dbReference type="ExpressionAtlas" id="P51858">
    <property type="expression patterns" value="baseline and differential"/>
</dbReference>
<dbReference type="GO" id="GO:0062023">
    <property type="term" value="C:collagen-containing extracellular matrix"/>
    <property type="evidence" value="ECO:0007005"/>
    <property type="project" value="BHF-UCL"/>
</dbReference>
<dbReference type="GO" id="GO:0005737">
    <property type="term" value="C:cytoplasm"/>
    <property type="evidence" value="ECO:0000314"/>
    <property type="project" value="UniProtKB"/>
</dbReference>
<dbReference type="GO" id="GO:0005576">
    <property type="term" value="C:extracellular region"/>
    <property type="evidence" value="ECO:0007005"/>
    <property type="project" value="BHF-UCL"/>
</dbReference>
<dbReference type="GO" id="GO:0005615">
    <property type="term" value="C:extracellular space"/>
    <property type="evidence" value="ECO:0007005"/>
    <property type="project" value="BHF-UCL"/>
</dbReference>
<dbReference type="GO" id="GO:0005654">
    <property type="term" value="C:nucleoplasm"/>
    <property type="evidence" value="ECO:0000314"/>
    <property type="project" value="HPA"/>
</dbReference>
<dbReference type="GO" id="GO:0005634">
    <property type="term" value="C:nucleus"/>
    <property type="evidence" value="ECO:0000314"/>
    <property type="project" value="UniProtKB"/>
</dbReference>
<dbReference type="GO" id="GO:0017053">
    <property type="term" value="C:transcription repressor complex"/>
    <property type="evidence" value="ECO:0000314"/>
    <property type="project" value="BHF-UCL"/>
</dbReference>
<dbReference type="GO" id="GO:0003779">
    <property type="term" value="F:actin binding"/>
    <property type="evidence" value="ECO:0000314"/>
    <property type="project" value="UniProtKB"/>
</dbReference>
<dbReference type="GO" id="GO:0001227">
    <property type="term" value="F:DNA-binding transcription repressor activity, RNA polymerase II-specific"/>
    <property type="evidence" value="ECO:0007669"/>
    <property type="project" value="Ensembl"/>
</dbReference>
<dbReference type="GO" id="GO:0008083">
    <property type="term" value="F:growth factor activity"/>
    <property type="evidence" value="ECO:0007669"/>
    <property type="project" value="UniProtKB-KW"/>
</dbReference>
<dbReference type="GO" id="GO:0008201">
    <property type="term" value="F:heparin binding"/>
    <property type="evidence" value="ECO:0000314"/>
    <property type="project" value="UniProtKB"/>
</dbReference>
<dbReference type="GO" id="GO:0000166">
    <property type="term" value="F:nucleotide binding"/>
    <property type="evidence" value="ECO:0007669"/>
    <property type="project" value="UniProtKB-KW"/>
</dbReference>
<dbReference type="GO" id="GO:0003723">
    <property type="term" value="F:RNA binding"/>
    <property type="evidence" value="ECO:0007005"/>
    <property type="project" value="UniProtKB"/>
</dbReference>
<dbReference type="GO" id="GO:0000978">
    <property type="term" value="F:RNA polymerase II cis-regulatory region sequence-specific DNA binding"/>
    <property type="evidence" value="ECO:0007669"/>
    <property type="project" value="Ensembl"/>
</dbReference>
<dbReference type="GO" id="GO:0003714">
    <property type="term" value="F:transcription corepressor activity"/>
    <property type="evidence" value="ECO:0000314"/>
    <property type="project" value="BHF-UCL"/>
</dbReference>
<dbReference type="GO" id="GO:0001222">
    <property type="term" value="F:transcription corepressor binding"/>
    <property type="evidence" value="ECO:0000353"/>
    <property type="project" value="BHF-UCL"/>
</dbReference>
<dbReference type="GO" id="GO:0015631">
    <property type="term" value="F:tubulin binding"/>
    <property type="evidence" value="ECO:0000314"/>
    <property type="project" value="UniProtKB"/>
</dbReference>
<dbReference type="GO" id="GO:0006338">
    <property type="term" value="P:chromatin remodeling"/>
    <property type="evidence" value="ECO:0000318"/>
    <property type="project" value="GO_Central"/>
</dbReference>
<dbReference type="GO" id="GO:0000122">
    <property type="term" value="P:negative regulation of transcription by RNA polymerase II"/>
    <property type="evidence" value="ECO:0000314"/>
    <property type="project" value="BHF-UCL"/>
</dbReference>
<dbReference type="GO" id="GO:0051781">
    <property type="term" value="P:positive regulation of cell division"/>
    <property type="evidence" value="ECO:0000314"/>
    <property type="project" value="UniProtKB"/>
</dbReference>
<dbReference type="GO" id="GO:0045944">
    <property type="term" value="P:positive regulation of transcription by RNA polymerase II"/>
    <property type="evidence" value="ECO:0007669"/>
    <property type="project" value="Ensembl"/>
</dbReference>
<dbReference type="GO" id="GO:0034504">
    <property type="term" value="P:protein localization to nucleus"/>
    <property type="evidence" value="ECO:0007669"/>
    <property type="project" value="Ensembl"/>
</dbReference>
<dbReference type="GO" id="GO:0007165">
    <property type="term" value="P:signal transduction"/>
    <property type="evidence" value="ECO:0000303"/>
    <property type="project" value="ProtInc"/>
</dbReference>
<dbReference type="FunFam" id="2.30.30.140:FF:000017">
    <property type="entry name" value="hepatoma-derived growth factor isoform X1"/>
    <property type="match status" value="1"/>
</dbReference>
<dbReference type="Gene3D" id="2.30.30.140">
    <property type="match status" value="1"/>
</dbReference>
<dbReference type="IDEAL" id="IID00454"/>
<dbReference type="InterPro" id="IPR000313">
    <property type="entry name" value="PWWP_dom"/>
</dbReference>
<dbReference type="PANTHER" id="PTHR12550:SF41">
    <property type="entry name" value="HEPATOMA-DERIVED GROWTH FACTOR"/>
    <property type="match status" value="1"/>
</dbReference>
<dbReference type="PANTHER" id="PTHR12550">
    <property type="entry name" value="HEPATOMA-DERIVED GROWTH FACTOR-RELATED"/>
    <property type="match status" value="1"/>
</dbReference>
<dbReference type="Pfam" id="PF00855">
    <property type="entry name" value="PWWP"/>
    <property type="match status" value="1"/>
</dbReference>
<dbReference type="SMART" id="SM00293">
    <property type="entry name" value="PWWP"/>
    <property type="match status" value="1"/>
</dbReference>
<dbReference type="SUPFAM" id="SSF63748">
    <property type="entry name" value="Tudor/PWWP/MBT"/>
    <property type="match status" value="1"/>
</dbReference>
<dbReference type="PROSITE" id="PS50812">
    <property type="entry name" value="PWWP"/>
    <property type="match status" value="1"/>
</dbReference>
<protein>
    <recommendedName>
        <fullName>Hepatoma-derived growth factor</fullName>
        <shortName>HDGF</shortName>
    </recommendedName>
    <alternativeName>
        <fullName>High mobility group protein 1-like 2</fullName>
        <shortName>HMG-1L2</shortName>
    </alternativeName>
</protein>
<evidence type="ECO:0000250" key="1">
    <source>
        <dbReference type="UniProtKB" id="P51859"/>
    </source>
</evidence>
<evidence type="ECO:0000250" key="2">
    <source>
        <dbReference type="UniProtKB" id="Q8VHK7"/>
    </source>
</evidence>
<evidence type="ECO:0000255" key="3">
    <source>
        <dbReference type="PROSITE-ProRule" id="PRU00162"/>
    </source>
</evidence>
<evidence type="ECO:0000256" key="4">
    <source>
        <dbReference type="SAM" id="MobiDB-lite"/>
    </source>
</evidence>
<evidence type="ECO:0000269" key="5">
    <source>
    </source>
</evidence>
<evidence type="ECO:0000269" key="6">
    <source>
    </source>
</evidence>
<evidence type="ECO:0000269" key="7">
    <source>
    </source>
</evidence>
<evidence type="ECO:0000269" key="8">
    <source>
    </source>
</evidence>
<evidence type="ECO:0000269" key="9">
    <source>
    </source>
</evidence>
<evidence type="ECO:0000269" key="10">
    <source>
    </source>
</evidence>
<evidence type="ECO:0000269" key="11">
    <source>
    </source>
</evidence>
<evidence type="ECO:0000269" key="12">
    <source>
    </source>
</evidence>
<evidence type="ECO:0000269" key="13">
    <source>
    </source>
</evidence>
<evidence type="ECO:0000303" key="14">
    <source>
    </source>
</evidence>
<evidence type="ECO:0000303" key="15">
    <source>
    </source>
</evidence>
<evidence type="ECO:0000305" key="16"/>
<evidence type="ECO:0007744" key="17">
    <source>
    </source>
</evidence>
<evidence type="ECO:0007744" key="18">
    <source>
    </source>
</evidence>
<evidence type="ECO:0007744" key="19">
    <source>
    </source>
</evidence>
<evidence type="ECO:0007744" key="20">
    <source>
    </source>
</evidence>
<evidence type="ECO:0007744" key="21">
    <source>
    </source>
</evidence>
<evidence type="ECO:0007744" key="22">
    <source>
    </source>
</evidence>
<evidence type="ECO:0007744" key="23">
    <source>
    </source>
</evidence>
<evidence type="ECO:0007744" key="24">
    <source>
    </source>
</evidence>
<evidence type="ECO:0007744" key="25">
    <source>
    </source>
</evidence>
<evidence type="ECO:0007744" key="26">
    <source>
    </source>
</evidence>
<evidence type="ECO:0007744" key="27">
    <source>
    </source>
</evidence>
<evidence type="ECO:0007744" key="28">
    <source>
    </source>
</evidence>
<evidence type="ECO:0007744" key="29">
    <source>
    </source>
</evidence>
<evidence type="ECO:0007744" key="30">
    <source>
    </source>
</evidence>
<evidence type="ECO:0007744" key="31">
    <source>
    </source>
</evidence>
<evidence type="ECO:0007744" key="32">
    <source>
    </source>
</evidence>
<evidence type="ECO:0007744" key="33">
    <source>
    </source>
</evidence>
<evidence type="ECO:0007744" key="34">
    <source>
    </source>
</evidence>
<evidence type="ECO:0007744" key="35">
    <source>
    </source>
</evidence>
<evidence type="ECO:0007744" key="36">
    <source>
    </source>
</evidence>
<evidence type="ECO:0007829" key="37">
    <source>
        <dbReference type="PDB" id="1RI0"/>
    </source>
</evidence>
<evidence type="ECO:0007829" key="38">
    <source>
        <dbReference type="PDB" id="2NLU"/>
    </source>
</evidence>
<comment type="function">
    <molecule>Isoform 1</molecule>
    <text evidence="5 7 9 11">Acts as a transcriptional repressor (PubMed:17974029). Has mitogenic activity for fibroblasts (PubMed:11751870, PubMed:26845719). Heparin-binding protein (PubMed:15491618).</text>
</comment>
<comment type="function">
    <molecule>Isoform 2</molecule>
    <text evidence="11">Does not have mitogenic activity for fibroblasts (PubMed:26845719). Does not bind heparin (PubMed:26845719).</text>
</comment>
<comment type="function">
    <molecule>Isoform 3</molecule>
    <text evidence="11">Has mitogenic activity for fibroblasts (PubMed:26845719). Heparin-binding protein (PubMed:26845719).</text>
</comment>
<comment type="subunit">
    <text evidence="8">Monomer, and domain-swapped homodimer (PubMed:17270212).</text>
</comment>
<comment type="subunit">
    <molecule>Isoform 1</molecule>
    <text evidence="11">Interacts with nuclear proteins NCL and YBX1/YB1 (PubMed:26845719).</text>
</comment>
<comment type="subunit">
    <molecule>Isoform 2</molecule>
    <text evidence="11">Interacts with cytoskeletal proteins such as actin, dynein, tubulin and vimentin (PubMed:26845719).</text>
</comment>
<comment type="subunit">
    <molecule>Isoform 3</molecule>
    <text evidence="11">Interacts with cytoskeletal proteins such as dynein and tubulin but does not interact with actin or vimentin (PubMed:26845719).</text>
</comment>
<comment type="subcellular location">
    <molecule>Isoform 1</molecule>
    <subcellularLocation>
        <location evidence="5 11">Nucleus</location>
    </subcellularLocation>
    <subcellularLocation>
        <location evidence="5">Cytoplasm</location>
    </subcellularLocation>
    <subcellularLocation>
        <location evidence="12">Secreted</location>
        <location evidence="12">Extracellular exosome</location>
    </subcellularLocation>
    <text evidence="12">Secreted by exosomes and is located inside the exosome (PubMed:27926477). May also be secreted as free protein via an as yet unknown pathway (PubMed:27926477).</text>
</comment>
<comment type="subcellular location">
    <molecule>Isoform 2</molecule>
    <subcellularLocation>
        <location evidence="11">Nucleus</location>
    </subcellularLocation>
    <subcellularLocation>
        <location evidence="11">Cytoplasm</location>
    </subcellularLocation>
    <subcellularLocation>
        <location evidence="12">Secreted</location>
        <location evidence="12">Extracellular exosome</location>
    </subcellularLocation>
    <text evidence="12">Secreted by exosomes and is located on the outer exosome surface.</text>
</comment>
<comment type="subcellular location">
    <molecule>Isoform 3</molecule>
    <subcellularLocation>
        <location evidence="11">Nucleus</location>
    </subcellularLocation>
    <subcellularLocation>
        <location evidence="11">Cytoplasm</location>
    </subcellularLocation>
    <subcellularLocation>
        <location evidence="12">Secreted</location>
        <location evidence="12">Extracellular exosome</location>
    </subcellularLocation>
    <text evidence="12">Secreted by exosomes and is located on the outer exosome surface.</text>
</comment>
<comment type="alternative products">
    <event type="alternative splicing"/>
    <isoform>
        <id>P51858-1</id>
        <name>1</name>
        <name evidence="15">HDFG-A</name>
        <sequence type="displayed"/>
    </isoform>
    <isoform>
        <id>P51858-2</id>
        <name>2</name>
        <name evidence="15">HDGF-C</name>
        <sequence type="described" ref="VSP_045620"/>
    </isoform>
    <isoform>
        <id>P51858-3</id>
        <name>3</name>
        <name evidence="15">HDGF-B</name>
        <sequence type="described" ref="VSP_047328"/>
    </isoform>
</comment>
<comment type="tissue specificity">
    <text evidence="13">Ubiquitous.</text>
</comment>
<comment type="domain">
    <text evidence="7 8">The PWWP domain harbors the heparin-binding sites and is responsible for DNA-binding, while the C-terminal region is essentially unstructured.</text>
</comment>
<comment type="domain">
    <text evidence="1 11">The N-terminal region does not contain a typical signal sequence but is required for secretion (By similarity). It also determines exosomal location (PubMed:26845719).</text>
</comment>
<comment type="PTM">
    <text evidence="10">Sumoylated with SUMO1. Sumoylation prevents binding to chromatin.</text>
</comment>
<comment type="PTM">
    <text evidence="1">Phosphorylation at Ser-165 is likely to be required for secretion.</text>
</comment>
<comment type="similarity">
    <text evidence="16">Belongs to the HDGF family.</text>
</comment>
<organism>
    <name type="scientific">Homo sapiens</name>
    <name type="common">Human</name>
    <dbReference type="NCBI Taxonomy" id="9606"/>
    <lineage>
        <taxon>Eukaryota</taxon>
        <taxon>Metazoa</taxon>
        <taxon>Chordata</taxon>
        <taxon>Craniata</taxon>
        <taxon>Vertebrata</taxon>
        <taxon>Euteleostomi</taxon>
        <taxon>Mammalia</taxon>
        <taxon>Eutheria</taxon>
        <taxon>Euarchontoglires</taxon>
        <taxon>Primates</taxon>
        <taxon>Haplorrhini</taxon>
        <taxon>Catarrhini</taxon>
        <taxon>Hominidae</taxon>
        <taxon>Homo</taxon>
    </lineage>
</organism>